<accession>Q67IE2</accession>
<reference key="1">
    <citation type="submission" date="2002-09" db="EMBL/GenBank/DDBJ databases">
        <title>Phylogenetic relationships among the major lineages of Asparagales based on a large chloroplast data set.</title>
        <authorList>
            <person name="McPherson M.A."/>
            <person name="Rai H.S."/>
            <person name="Wong W.A."/>
            <person name="Graham S.W."/>
        </authorList>
    </citation>
    <scope>NUCLEOTIDE SEQUENCE [GENOMIC DNA]</scope>
</reference>
<dbReference type="EC" id="7.1.1.-" evidence="1"/>
<dbReference type="EMBL" id="AY147485">
    <property type="protein sequence ID" value="AAN32061.1"/>
    <property type="status" value="ALT_INIT"/>
    <property type="molecule type" value="Genomic_DNA"/>
</dbReference>
<dbReference type="SMR" id="Q67IE2"/>
<dbReference type="GO" id="GO:0009535">
    <property type="term" value="C:chloroplast thylakoid membrane"/>
    <property type="evidence" value="ECO:0007669"/>
    <property type="project" value="UniProtKB-SubCell"/>
</dbReference>
<dbReference type="GO" id="GO:0008137">
    <property type="term" value="F:NADH dehydrogenase (ubiquinone) activity"/>
    <property type="evidence" value="ECO:0007669"/>
    <property type="project" value="InterPro"/>
</dbReference>
<dbReference type="GO" id="GO:0048038">
    <property type="term" value="F:quinone binding"/>
    <property type="evidence" value="ECO:0007669"/>
    <property type="project" value="UniProtKB-KW"/>
</dbReference>
<dbReference type="GO" id="GO:0042773">
    <property type="term" value="P:ATP synthesis coupled electron transport"/>
    <property type="evidence" value="ECO:0007669"/>
    <property type="project" value="InterPro"/>
</dbReference>
<dbReference type="GO" id="GO:0019684">
    <property type="term" value="P:photosynthesis, light reaction"/>
    <property type="evidence" value="ECO:0007669"/>
    <property type="project" value="UniProtKB-UniRule"/>
</dbReference>
<dbReference type="HAMAP" id="MF_00445">
    <property type="entry name" value="NDH1_NuoN_1"/>
    <property type="match status" value="1"/>
</dbReference>
<dbReference type="InterPro" id="IPR010096">
    <property type="entry name" value="NADH-Q_OxRdtase_suN/2"/>
</dbReference>
<dbReference type="InterPro" id="IPR001750">
    <property type="entry name" value="ND/Mrp_TM"/>
</dbReference>
<dbReference type="InterPro" id="IPR045693">
    <property type="entry name" value="Ndh2_N"/>
</dbReference>
<dbReference type="NCBIfam" id="TIGR01770">
    <property type="entry name" value="NDH_I_N"/>
    <property type="match status" value="1"/>
</dbReference>
<dbReference type="NCBIfam" id="NF002701">
    <property type="entry name" value="PRK02504.1"/>
    <property type="match status" value="1"/>
</dbReference>
<dbReference type="PANTHER" id="PTHR22773">
    <property type="entry name" value="NADH DEHYDROGENASE"/>
    <property type="match status" value="1"/>
</dbReference>
<dbReference type="Pfam" id="PF19530">
    <property type="entry name" value="Ndh2_N"/>
    <property type="match status" value="1"/>
</dbReference>
<dbReference type="Pfam" id="PF00361">
    <property type="entry name" value="Proton_antipo_M"/>
    <property type="match status" value="1"/>
</dbReference>
<dbReference type="PRINTS" id="PR01434">
    <property type="entry name" value="NADHDHGNASE5"/>
</dbReference>
<gene>
    <name evidence="1" type="primary">ndhB</name>
</gene>
<protein>
    <recommendedName>
        <fullName evidence="1">NAD(P)H-quinone oxidoreductase subunit 2, chloroplastic</fullName>
        <ecNumber evidence="1">7.1.1.-</ecNumber>
    </recommendedName>
    <alternativeName>
        <fullName evidence="1">NAD(P)H dehydrogenase, subunit 2</fullName>
    </alternativeName>
    <alternativeName>
        <fullName evidence="1">NADH-plastoquinone oxidoreductase subunit 2</fullName>
    </alternativeName>
</protein>
<keyword id="KW-0150">Chloroplast</keyword>
<keyword id="KW-0472">Membrane</keyword>
<keyword id="KW-0520">NAD</keyword>
<keyword id="KW-0521">NADP</keyword>
<keyword id="KW-0934">Plastid</keyword>
<keyword id="KW-0618">Plastoquinone</keyword>
<keyword id="KW-0874">Quinone</keyword>
<keyword id="KW-0793">Thylakoid</keyword>
<keyword id="KW-1278">Translocase</keyword>
<keyword id="KW-0812">Transmembrane</keyword>
<keyword id="KW-1133">Transmembrane helix</keyword>
<keyword id="KW-0813">Transport</keyword>
<evidence type="ECO:0000255" key="1">
    <source>
        <dbReference type="HAMAP-Rule" id="MF_00445"/>
    </source>
</evidence>
<evidence type="ECO:0000305" key="2"/>
<name>NU2C_PHOTN</name>
<feature type="chain" id="PRO_0000117674" description="NAD(P)H-quinone oxidoreductase subunit 2, chloroplastic">
    <location>
        <begin position="1"/>
        <end position="510"/>
    </location>
</feature>
<feature type="transmembrane region" description="Helical" evidence="1">
    <location>
        <begin position="24"/>
        <end position="44"/>
    </location>
</feature>
<feature type="transmembrane region" description="Helical" evidence="1">
    <location>
        <begin position="59"/>
        <end position="79"/>
    </location>
</feature>
<feature type="transmembrane region" description="Helical" evidence="1">
    <location>
        <begin position="99"/>
        <end position="119"/>
    </location>
</feature>
<feature type="transmembrane region" description="Helical" evidence="1">
    <location>
        <begin position="124"/>
        <end position="144"/>
    </location>
</feature>
<feature type="transmembrane region" description="Helical" evidence="1">
    <location>
        <begin position="149"/>
        <end position="169"/>
    </location>
</feature>
<feature type="transmembrane region" description="Helical" evidence="1">
    <location>
        <begin position="183"/>
        <end position="203"/>
    </location>
</feature>
<feature type="transmembrane region" description="Helical" evidence="1">
    <location>
        <begin position="229"/>
        <end position="249"/>
    </location>
</feature>
<feature type="transmembrane region" description="Helical" evidence="1">
    <location>
        <begin position="295"/>
        <end position="315"/>
    </location>
</feature>
<feature type="transmembrane region" description="Helical" evidence="1">
    <location>
        <begin position="323"/>
        <end position="343"/>
    </location>
</feature>
<feature type="transmembrane region" description="Helical" evidence="1">
    <location>
        <begin position="347"/>
        <end position="367"/>
    </location>
</feature>
<feature type="transmembrane region" description="Helical" evidence="1">
    <location>
        <begin position="395"/>
        <end position="415"/>
    </location>
</feature>
<feature type="transmembrane region" description="Helical" evidence="1">
    <location>
        <begin position="418"/>
        <end position="438"/>
    </location>
</feature>
<sequence length="510" mass="56840">MIWHVQNENFILDSTRIFMKAFHLLLFHGSFIFPECILIFGLILLLMIDLTSDQKDRPWFYFISSTSLVMSITALLFRWKEEPIISFSGNFQTNNFNEIFQFLILLCSTLCIPLSVEYIECTEMAITEFLLFVLTATLGGMFLCGANDFITIFVAPECFSLCSYLLSGYTKRDVRSNEATTKYLLMGGASSSILVHGFSWLYGSSGGEIELQEIVNGLINTQMYNSPGISIALISITVGIGFKLSPAPFHQWTPDVYEGSPTPVVAFLSVTSKVAASASATRIFDIPFYFSSNEWHLLLEILAILSMILGNLIAITQTSMKRMLAYSSIGQIGYVIIGIIVGDSNDGYASMITYMLFYISMNLGTFARIVSFGLRTGTDNIRDYAGLYTKDPFLALSLALCLLSLGGLPPLAGFFGKLHLFWCGWQAGLYFLVSIGLLTSVVSIYYYLKIIKLLMTGRNQEITPHVRNYRRSPLRSNNSIEWSMTVCVIASTIPGISMNPILAIAQDTLF</sequence>
<organism>
    <name type="scientific">Phormium tenax</name>
    <name type="common">New Zealand flax</name>
    <dbReference type="NCBI Taxonomy" id="51475"/>
    <lineage>
        <taxon>Eukaryota</taxon>
        <taxon>Viridiplantae</taxon>
        <taxon>Streptophyta</taxon>
        <taxon>Embryophyta</taxon>
        <taxon>Tracheophyta</taxon>
        <taxon>Spermatophyta</taxon>
        <taxon>Magnoliopsida</taxon>
        <taxon>Liliopsida</taxon>
        <taxon>Asparagales</taxon>
        <taxon>Asphodelaceae</taxon>
        <taxon>Hemerocallidoideae</taxon>
        <taxon>Phormium</taxon>
    </lineage>
</organism>
<geneLocation type="chloroplast"/>
<comment type="function">
    <text evidence="1">NDH shuttles electrons from NAD(P)H:plastoquinone, via FMN and iron-sulfur (Fe-S) centers, to quinones in the photosynthetic chain and possibly in a chloroplast respiratory chain. The immediate electron acceptor for the enzyme in this species is believed to be plastoquinone. Couples the redox reaction to proton translocation, and thus conserves the redox energy in a proton gradient.</text>
</comment>
<comment type="catalytic activity">
    <reaction evidence="1">
        <text>a plastoquinone + NADH + (n+1) H(+)(in) = a plastoquinol + NAD(+) + n H(+)(out)</text>
        <dbReference type="Rhea" id="RHEA:42608"/>
        <dbReference type="Rhea" id="RHEA-COMP:9561"/>
        <dbReference type="Rhea" id="RHEA-COMP:9562"/>
        <dbReference type="ChEBI" id="CHEBI:15378"/>
        <dbReference type="ChEBI" id="CHEBI:17757"/>
        <dbReference type="ChEBI" id="CHEBI:57540"/>
        <dbReference type="ChEBI" id="CHEBI:57945"/>
        <dbReference type="ChEBI" id="CHEBI:62192"/>
    </reaction>
</comment>
<comment type="catalytic activity">
    <reaction evidence="1">
        <text>a plastoquinone + NADPH + (n+1) H(+)(in) = a plastoquinol + NADP(+) + n H(+)(out)</text>
        <dbReference type="Rhea" id="RHEA:42612"/>
        <dbReference type="Rhea" id="RHEA-COMP:9561"/>
        <dbReference type="Rhea" id="RHEA-COMP:9562"/>
        <dbReference type="ChEBI" id="CHEBI:15378"/>
        <dbReference type="ChEBI" id="CHEBI:17757"/>
        <dbReference type="ChEBI" id="CHEBI:57783"/>
        <dbReference type="ChEBI" id="CHEBI:58349"/>
        <dbReference type="ChEBI" id="CHEBI:62192"/>
    </reaction>
</comment>
<comment type="subunit">
    <text evidence="1">NDH is composed of at least 16 different subunits, 5 of which are encoded in the nucleus.</text>
</comment>
<comment type="subcellular location">
    <subcellularLocation>
        <location evidence="1">Plastid</location>
        <location evidence="1">Chloroplast thylakoid membrane</location>
        <topology evidence="1">Multi-pass membrane protein</topology>
    </subcellularLocation>
</comment>
<comment type="similarity">
    <text evidence="1">Belongs to the complex I subunit 2 family.</text>
</comment>
<comment type="sequence caution" evidence="2">
    <conflict type="erroneous initiation">
        <sequence resource="EMBL-CDS" id="AAN32061"/>
    </conflict>
</comment>
<proteinExistence type="inferred from homology"/>